<reference key="1">
    <citation type="submission" date="2007-05" db="EMBL/GenBank/DDBJ databases">
        <title>Complete sequence of Thermosipho melanesiensis BI429.</title>
        <authorList>
            <consortium name="US DOE Joint Genome Institute"/>
            <person name="Copeland A."/>
            <person name="Lucas S."/>
            <person name="Lapidus A."/>
            <person name="Barry K."/>
            <person name="Glavina del Rio T."/>
            <person name="Dalin E."/>
            <person name="Tice H."/>
            <person name="Pitluck S."/>
            <person name="Chertkov O."/>
            <person name="Brettin T."/>
            <person name="Bruce D."/>
            <person name="Detter J.C."/>
            <person name="Han C."/>
            <person name="Schmutz J."/>
            <person name="Larimer F."/>
            <person name="Land M."/>
            <person name="Hauser L."/>
            <person name="Kyrpides N."/>
            <person name="Mikhailova N."/>
            <person name="Nelson K."/>
            <person name="Gogarten J.P."/>
            <person name="Noll K."/>
            <person name="Richardson P."/>
        </authorList>
    </citation>
    <scope>NUCLEOTIDE SEQUENCE [LARGE SCALE GENOMIC DNA]</scope>
    <source>
        <strain>DSM 12029 / CIP 104789 / BI429</strain>
    </source>
</reference>
<keyword id="KW-0963">Cytoplasm</keyword>
<keyword id="KW-0489">Methyltransferase</keyword>
<keyword id="KW-0698">rRNA processing</keyword>
<keyword id="KW-0949">S-adenosyl-L-methionine</keyword>
<keyword id="KW-0808">Transferase</keyword>
<protein>
    <recommendedName>
        <fullName evidence="1">Ribosomal RNA large subunit methyltransferase H</fullName>
        <ecNumber evidence="1">2.1.1.177</ecNumber>
    </recommendedName>
    <alternativeName>
        <fullName evidence="1">23S rRNA (pseudouridine1915-N3)-methyltransferase</fullName>
    </alternativeName>
    <alternativeName>
        <fullName evidence="1">23S rRNA m3Psi1915 methyltransferase</fullName>
    </alternativeName>
    <alternativeName>
        <fullName evidence="1">rRNA (pseudouridine-N3-)-methyltransferase RlmH</fullName>
    </alternativeName>
</protein>
<accession>A6LJG1</accession>
<gene>
    <name evidence="1" type="primary">rlmH</name>
    <name type="ordered locus">Tmel_0185</name>
</gene>
<organism>
    <name type="scientific">Thermosipho melanesiensis (strain DSM 12029 / CIP 104789 / BI429)</name>
    <dbReference type="NCBI Taxonomy" id="391009"/>
    <lineage>
        <taxon>Bacteria</taxon>
        <taxon>Thermotogati</taxon>
        <taxon>Thermotogota</taxon>
        <taxon>Thermotogae</taxon>
        <taxon>Thermotogales</taxon>
        <taxon>Fervidobacteriaceae</taxon>
        <taxon>Thermosipho</taxon>
    </lineage>
</organism>
<feature type="chain" id="PRO_1000082823" description="Ribosomal RNA large subunit methyltransferase H">
    <location>
        <begin position="1"/>
        <end position="152"/>
    </location>
</feature>
<feature type="binding site" evidence="1">
    <location>
        <position position="71"/>
    </location>
    <ligand>
        <name>S-adenosyl-L-methionine</name>
        <dbReference type="ChEBI" id="CHEBI:59789"/>
    </ligand>
</feature>
<feature type="binding site" evidence="1">
    <location>
        <position position="101"/>
    </location>
    <ligand>
        <name>S-adenosyl-L-methionine</name>
        <dbReference type="ChEBI" id="CHEBI:59789"/>
    </ligand>
</feature>
<feature type="binding site" evidence="1">
    <location>
        <begin position="120"/>
        <end position="125"/>
    </location>
    <ligand>
        <name>S-adenosyl-L-methionine</name>
        <dbReference type="ChEBI" id="CHEBI:59789"/>
    </ligand>
</feature>
<dbReference type="EC" id="2.1.1.177" evidence="1"/>
<dbReference type="EMBL" id="CP000716">
    <property type="protein sequence ID" value="ABR30062.1"/>
    <property type="molecule type" value="Genomic_DNA"/>
</dbReference>
<dbReference type="RefSeq" id="WP_012056423.1">
    <property type="nucleotide sequence ID" value="NC_009616.1"/>
</dbReference>
<dbReference type="SMR" id="A6LJG1"/>
<dbReference type="STRING" id="391009.Tmel_0185"/>
<dbReference type="KEGG" id="tme:Tmel_0185"/>
<dbReference type="eggNOG" id="COG1576">
    <property type="taxonomic scope" value="Bacteria"/>
</dbReference>
<dbReference type="HOGENOM" id="CLU_100552_2_0_0"/>
<dbReference type="OrthoDB" id="9806643at2"/>
<dbReference type="Proteomes" id="UP000001110">
    <property type="component" value="Chromosome"/>
</dbReference>
<dbReference type="GO" id="GO:0005737">
    <property type="term" value="C:cytoplasm"/>
    <property type="evidence" value="ECO:0007669"/>
    <property type="project" value="UniProtKB-SubCell"/>
</dbReference>
<dbReference type="GO" id="GO:0070038">
    <property type="term" value="F:rRNA (pseudouridine-N3-)-methyltransferase activity"/>
    <property type="evidence" value="ECO:0007669"/>
    <property type="project" value="UniProtKB-UniRule"/>
</dbReference>
<dbReference type="CDD" id="cd18081">
    <property type="entry name" value="RlmH-like"/>
    <property type="match status" value="1"/>
</dbReference>
<dbReference type="Gene3D" id="3.40.1280.10">
    <property type="match status" value="1"/>
</dbReference>
<dbReference type="HAMAP" id="MF_00658">
    <property type="entry name" value="23SrRNA_methyltr_H"/>
    <property type="match status" value="1"/>
</dbReference>
<dbReference type="InterPro" id="IPR029028">
    <property type="entry name" value="Alpha/beta_knot_MTases"/>
</dbReference>
<dbReference type="InterPro" id="IPR003742">
    <property type="entry name" value="RlmH-like"/>
</dbReference>
<dbReference type="InterPro" id="IPR029026">
    <property type="entry name" value="tRNA_m1G_MTases_N"/>
</dbReference>
<dbReference type="PANTHER" id="PTHR33603">
    <property type="entry name" value="METHYLTRANSFERASE"/>
    <property type="match status" value="1"/>
</dbReference>
<dbReference type="PANTHER" id="PTHR33603:SF1">
    <property type="entry name" value="RIBOSOMAL RNA LARGE SUBUNIT METHYLTRANSFERASE H"/>
    <property type="match status" value="1"/>
</dbReference>
<dbReference type="Pfam" id="PF02590">
    <property type="entry name" value="SPOUT_MTase"/>
    <property type="match status" value="1"/>
</dbReference>
<dbReference type="PIRSF" id="PIRSF004505">
    <property type="entry name" value="MT_bac"/>
    <property type="match status" value="1"/>
</dbReference>
<dbReference type="SUPFAM" id="SSF75217">
    <property type="entry name" value="alpha/beta knot"/>
    <property type="match status" value="1"/>
</dbReference>
<name>RLMH_THEM4</name>
<proteinExistence type="inferred from homology"/>
<comment type="function">
    <text evidence="1">Specifically methylates the pseudouridine at position 1915 (m3Psi1915) in 23S rRNA.</text>
</comment>
<comment type="catalytic activity">
    <reaction evidence="1">
        <text>pseudouridine(1915) in 23S rRNA + S-adenosyl-L-methionine = N(3)-methylpseudouridine(1915) in 23S rRNA + S-adenosyl-L-homocysteine + H(+)</text>
        <dbReference type="Rhea" id="RHEA:42752"/>
        <dbReference type="Rhea" id="RHEA-COMP:10221"/>
        <dbReference type="Rhea" id="RHEA-COMP:10222"/>
        <dbReference type="ChEBI" id="CHEBI:15378"/>
        <dbReference type="ChEBI" id="CHEBI:57856"/>
        <dbReference type="ChEBI" id="CHEBI:59789"/>
        <dbReference type="ChEBI" id="CHEBI:65314"/>
        <dbReference type="ChEBI" id="CHEBI:74486"/>
        <dbReference type="EC" id="2.1.1.177"/>
    </reaction>
</comment>
<comment type="subunit">
    <text evidence="1">Homodimer.</text>
</comment>
<comment type="subcellular location">
    <subcellularLocation>
        <location evidence="1">Cytoplasm</location>
    </subcellularLocation>
</comment>
<comment type="similarity">
    <text evidence="1">Belongs to the RNA methyltransferase RlmH family.</text>
</comment>
<sequence length="152" mass="17540">MKIEVIVPGKISKHLKSAFDFYLDKLKRFCDLKISFVRLGGDINKTSKSVILNNEEKEILNKLKGRSFVLLDLYGKQIDSLEFSSLLKNKLLEGNLCFVIGGPLGISENLRRMSEKRISLSKLTFTHEMALILLLEQLFRGFKIINNEKYHY</sequence>
<evidence type="ECO:0000255" key="1">
    <source>
        <dbReference type="HAMAP-Rule" id="MF_00658"/>
    </source>
</evidence>